<sequence length="125" mass="13141">MSWQAYVDDQLVGTGHVIGAAIIGHDGNVWASKNLSLKAGEGAKIVNGFKDSASVLSGGIFVDGQKYLTIKADDKSIYGKKGAGGVVLVKTGQSVLIGHYNETIQPGQATTVVEKLADYLRENGY</sequence>
<dbReference type="EMBL" id="M38037">
    <property type="protein sequence ID" value="AAA63523.1"/>
    <property type="molecule type" value="Genomic_DNA"/>
</dbReference>
<dbReference type="PIR" id="A35273">
    <property type="entry name" value="A35273"/>
</dbReference>
<dbReference type="SMR" id="P22271"/>
<dbReference type="GO" id="GO:0005938">
    <property type="term" value="C:cell cortex"/>
    <property type="evidence" value="ECO:0007669"/>
    <property type="project" value="TreeGrafter"/>
</dbReference>
<dbReference type="GO" id="GO:0005856">
    <property type="term" value="C:cytoskeleton"/>
    <property type="evidence" value="ECO:0007669"/>
    <property type="project" value="UniProtKB-SubCell"/>
</dbReference>
<dbReference type="GO" id="GO:0003785">
    <property type="term" value="F:actin monomer binding"/>
    <property type="evidence" value="ECO:0007669"/>
    <property type="project" value="TreeGrafter"/>
</dbReference>
<dbReference type="CDD" id="cd00148">
    <property type="entry name" value="PROF"/>
    <property type="match status" value="1"/>
</dbReference>
<dbReference type="FunFam" id="3.30.450.30:FF:000001">
    <property type="entry name" value="Profilin"/>
    <property type="match status" value="1"/>
</dbReference>
<dbReference type="Gene3D" id="3.30.450.30">
    <property type="entry name" value="Dynein light chain 2a, cytoplasmic"/>
    <property type="match status" value="1"/>
</dbReference>
<dbReference type="InterPro" id="IPR048278">
    <property type="entry name" value="PFN"/>
</dbReference>
<dbReference type="InterPro" id="IPR005455">
    <property type="entry name" value="PFN_euk"/>
</dbReference>
<dbReference type="InterPro" id="IPR036140">
    <property type="entry name" value="PFN_sf"/>
</dbReference>
<dbReference type="InterPro" id="IPR027310">
    <property type="entry name" value="Profilin_CS"/>
</dbReference>
<dbReference type="PANTHER" id="PTHR11604">
    <property type="entry name" value="PROFILIN"/>
    <property type="match status" value="1"/>
</dbReference>
<dbReference type="PANTHER" id="PTHR11604:SF0">
    <property type="entry name" value="PROFILIN"/>
    <property type="match status" value="1"/>
</dbReference>
<dbReference type="Pfam" id="PF00235">
    <property type="entry name" value="Profilin"/>
    <property type="match status" value="1"/>
</dbReference>
<dbReference type="PRINTS" id="PR00392">
    <property type="entry name" value="PROFILIN"/>
</dbReference>
<dbReference type="PRINTS" id="PR01640">
    <property type="entry name" value="PROFILINPLNT"/>
</dbReference>
<dbReference type="SMART" id="SM00392">
    <property type="entry name" value="PROF"/>
    <property type="match status" value="1"/>
</dbReference>
<dbReference type="SUPFAM" id="SSF55770">
    <property type="entry name" value="Profilin (actin-binding protein)"/>
    <property type="match status" value="1"/>
</dbReference>
<dbReference type="PROSITE" id="PS00414">
    <property type="entry name" value="PROFILIN"/>
    <property type="match status" value="1"/>
</dbReference>
<accession>P22271</accession>
<proteinExistence type="inferred from homology"/>
<evidence type="ECO:0000250" key="1"/>
<evidence type="ECO:0000305" key="2"/>
<keyword id="KW-0007">Acetylation</keyword>
<keyword id="KW-0009">Actin-binding</keyword>
<keyword id="KW-0963">Cytoplasm</keyword>
<keyword id="KW-0206">Cytoskeleton</keyword>
<name>PROF1_PHYPO</name>
<reference key="1">
    <citation type="journal article" date="1990" name="DNA Cell Biol.">
        <title>Cell-specific expression of a profilin gene family.</title>
        <authorList>
            <person name="Binette F."/>
            <person name="Benard M."/>
            <person name="Laroche A."/>
            <person name="Pierron G."/>
            <person name="Lemieux G."/>
            <person name="Pallotta D."/>
        </authorList>
    </citation>
    <scope>NUCLEOTIDE SEQUENCE [GENOMIC DNA]</scope>
</reference>
<protein>
    <recommendedName>
        <fullName>Profilin-A</fullName>
    </recommendedName>
</protein>
<feature type="initiator methionine" description="Removed" evidence="1">
    <location>
        <position position="1"/>
    </location>
</feature>
<feature type="chain" id="PRO_0000199600" description="Profilin-A">
    <location>
        <begin position="2"/>
        <end position="125"/>
    </location>
</feature>
<feature type="modified residue" description="N-acetylserine" evidence="1">
    <location>
        <position position="2"/>
    </location>
</feature>
<gene>
    <name type="primary">PROA</name>
</gene>
<organism>
    <name type="scientific">Physarum polycephalum</name>
    <name type="common">Slime mold</name>
    <dbReference type="NCBI Taxonomy" id="5791"/>
    <lineage>
        <taxon>Eukaryota</taxon>
        <taxon>Amoebozoa</taxon>
        <taxon>Evosea</taxon>
        <taxon>Eumycetozoa</taxon>
        <taxon>Myxogastria</taxon>
        <taxon>Myxogastromycetidae</taxon>
        <taxon>Physariida</taxon>
        <taxon>Physaraceae</taxon>
        <taxon>Physarum</taxon>
    </lineage>
</organism>
<comment type="function">
    <text>Binds to actin and affects the structure of the cytoskeleton. At high concentrations, profilin prevents the polymerization of actin, whereas it enhances it at low concentrations. By binding to PIP2, it inhibits the formation of IP3 and DG.</text>
</comment>
<comment type="subunit">
    <text>Occurs in many kinds of cells as a complex with monomeric actin in a 1:1 ratio.</text>
</comment>
<comment type="subcellular location">
    <subcellularLocation>
        <location>Cytoplasm</location>
        <location>Cytoskeleton</location>
    </subcellularLocation>
</comment>
<comment type="similarity">
    <text evidence="2">Belongs to the profilin family.</text>
</comment>